<comment type="function">
    <text evidence="1">Catalyzes the formation of phosphatidylethanolamine (PtdEtn) from phosphatidylserine (PtdSer).</text>
</comment>
<comment type="catalytic activity">
    <reaction evidence="1">
        <text>a 1,2-diacyl-sn-glycero-3-phospho-L-serine + H(+) = a 1,2-diacyl-sn-glycero-3-phosphoethanolamine + CO2</text>
        <dbReference type="Rhea" id="RHEA:20828"/>
        <dbReference type="ChEBI" id="CHEBI:15378"/>
        <dbReference type="ChEBI" id="CHEBI:16526"/>
        <dbReference type="ChEBI" id="CHEBI:57262"/>
        <dbReference type="ChEBI" id="CHEBI:64612"/>
        <dbReference type="EC" id="4.1.1.65"/>
    </reaction>
</comment>
<comment type="cofactor">
    <cofactor evidence="1">
        <name>pyruvate</name>
        <dbReference type="ChEBI" id="CHEBI:15361"/>
    </cofactor>
    <text evidence="1">Binds 1 pyruvoyl group covalently per subunit.</text>
</comment>
<comment type="pathway">
    <text evidence="1">Phospholipid metabolism; phosphatidylethanolamine biosynthesis; phosphatidylethanolamine from CDP-diacylglycerol: step 2/2.</text>
</comment>
<comment type="subunit">
    <text evidence="1">Heterodimer of a large membrane-associated beta subunit and a small pyruvoyl-containing alpha subunit.</text>
</comment>
<comment type="subcellular location">
    <subcellularLocation>
        <location evidence="1">Cell membrane</location>
        <topology evidence="1">Peripheral membrane protein</topology>
    </subcellularLocation>
</comment>
<comment type="PTM">
    <text evidence="1">Is synthesized initially as an inactive proenzyme. Formation of the active enzyme involves a self-maturation process in which the active site pyruvoyl group is generated from an internal serine residue via an autocatalytic post-translational modification. Two non-identical subunits are generated from the proenzyme in this reaction, and the pyruvate is formed at the N-terminus of the alpha chain, which is derived from the carboxyl end of the proenzyme. The post-translation cleavage follows an unusual pathway, termed non-hydrolytic serinolysis, in which the side chain hydroxyl group of the serine supplies its oxygen atom to form the C-terminus of the beta chain, while the remainder of the serine residue undergoes an oxidative deamination to produce ammonia and the pyruvoyl prosthetic group on the alpha chain.</text>
</comment>
<comment type="similarity">
    <text evidence="1">Belongs to the phosphatidylserine decarboxylase family. PSD-A subfamily.</text>
</comment>
<proteinExistence type="inferred from homology"/>
<protein>
    <recommendedName>
        <fullName evidence="1">Phosphatidylserine decarboxylase proenzyme</fullName>
        <ecNumber evidence="1">4.1.1.65</ecNumber>
    </recommendedName>
    <component>
        <recommendedName>
            <fullName evidence="1">Phosphatidylserine decarboxylase alpha chain</fullName>
        </recommendedName>
    </component>
    <component>
        <recommendedName>
            <fullName evidence="1">Phosphatidylserine decarboxylase beta chain</fullName>
        </recommendedName>
    </component>
</protein>
<gene>
    <name evidence="1" type="primary">psd</name>
    <name type="ordered locus">GM21_1497</name>
</gene>
<organism>
    <name type="scientific">Geobacter sp. (strain M21)</name>
    <dbReference type="NCBI Taxonomy" id="443144"/>
    <lineage>
        <taxon>Bacteria</taxon>
        <taxon>Pseudomonadati</taxon>
        <taxon>Thermodesulfobacteriota</taxon>
        <taxon>Desulfuromonadia</taxon>
        <taxon>Geobacterales</taxon>
        <taxon>Geobacteraceae</taxon>
        <taxon>Geobacter</taxon>
    </lineage>
</organism>
<sequence>MRNTDTPIAVEGYPFIAGFAAATLLLALLGQFLHLGFFVPATLFFVLTVFTVFFFRNPERVTPGDENTVVAPADGEVIFLGKVIEPHTNGEFEKISIFMSVFNVHVNRAPISGKVVDGFYTKGKFFDVRDERASFENEQQGLVLETAAGLRMVVVQVAGLIARRIVCYAKTGDSLSRGRRYGLIRFGSRLDIYLPLGTRIDLVMGQKTVAGETVLGILP</sequence>
<keyword id="KW-1003">Cell membrane</keyword>
<keyword id="KW-0210">Decarboxylase</keyword>
<keyword id="KW-0444">Lipid biosynthesis</keyword>
<keyword id="KW-0443">Lipid metabolism</keyword>
<keyword id="KW-0456">Lyase</keyword>
<keyword id="KW-0472">Membrane</keyword>
<keyword id="KW-0594">Phospholipid biosynthesis</keyword>
<keyword id="KW-1208">Phospholipid metabolism</keyword>
<keyword id="KW-0670">Pyruvate</keyword>
<keyword id="KW-0865">Zymogen</keyword>
<accession>C6E524</accession>
<feature type="chain" id="PRO_1000212495" description="Phosphatidylserine decarboxylase beta chain" evidence="1">
    <location>
        <begin position="1"/>
        <end position="187"/>
    </location>
</feature>
<feature type="chain" id="PRO_1000212496" description="Phosphatidylserine decarboxylase alpha chain" evidence="1">
    <location>
        <begin position="188"/>
        <end position="219"/>
    </location>
</feature>
<feature type="active site" description="Schiff-base intermediate with substrate; via pyruvic acid" evidence="1">
    <location>
        <position position="188"/>
    </location>
</feature>
<feature type="site" description="Cleavage (non-hydrolytic); by autocatalysis" evidence="1">
    <location>
        <begin position="187"/>
        <end position="188"/>
    </location>
</feature>
<feature type="modified residue" description="Pyruvic acid (Ser); by autocatalysis" evidence="1">
    <location>
        <position position="188"/>
    </location>
</feature>
<reference key="1">
    <citation type="submission" date="2009-07" db="EMBL/GenBank/DDBJ databases">
        <title>Complete sequence of Geobacter sp. M21.</title>
        <authorList>
            <consortium name="US DOE Joint Genome Institute"/>
            <person name="Lucas S."/>
            <person name="Copeland A."/>
            <person name="Lapidus A."/>
            <person name="Glavina del Rio T."/>
            <person name="Dalin E."/>
            <person name="Tice H."/>
            <person name="Bruce D."/>
            <person name="Goodwin L."/>
            <person name="Pitluck S."/>
            <person name="Saunders E."/>
            <person name="Brettin T."/>
            <person name="Detter J.C."/>
            <person name="Han C."/>
            <person name="Larimer F."/>
            <person name="Land M."/>
            <person name="Hauser L."/>
            <person name="Kyrpides N."/>
            <person name="Ovchinnikova G."/>
            <person name="Lovley D."/>
        </authorList>
    </citation>
    <scope>NUCLEOTIDE SEQUENCE [LARGE SCALE GENOMIC DNA]</scope>
    <source>
        <strain>M21</strain>
    </source>
</reference>
<dbReference type="EC" id="4.1.1.65" evidence="1"/>
<dbReference type="EMBL" id="CP001661">
    <property type="protein sequence ID" value="ACT17553.1"/>
    <property type="molecule type" value="Genomic_DNA"/>
</dbReference>
<dbReference type="STRING" id="443144.GM21_1497"/>
<dbReference type="KEGG" id="gem:GM21_1497"/>
<dbReference type="eggNOG" id="COG0688">
    <property type="taxonomic scope" value="Bacteria"/>
</dbReference>
<dbReference type="HOGENOM" id="CLU_072492_0_0_7"/>
<dbReference type="OrthoDB" id="9790893at2"/>
<dbReference type="UniPathway" id="UPA00558">
    <property type="reaction ID" value="UER00616"/>
</dbReference>
<dbReference type="GO" id="GO:0005886">
    <property type="term" value="C:plasma membrane"/>
    <property type="evidence" value="ECO:0007669"/>
    <property type="project" value="UniProtKB-SubCell"/>
</dbReference>
<dbReference type="GO" id="GO:0004609">
    <property type="term" value="F:phosphatidylserine decarboxylase activity"/>
    <property type="evidence" value="ECO:0007669"/>
    <property type="project" value="UniProtKB-UniRule"/>
</dbReference>
<dbReference type="GO" id="GO:0006646">
    <property type="term" value="P:phosphatidylethanolamine biosynthetic process"/>
    <property type="evidence" value="ECO:0007669"/>
    <property type="project" value="UniProtKB-UniRule"/>
</dbReference>
<dbReference type="HAMAP" id="MF_00664">
    <property type="entry name" value="PS_decarb_PSD_A"/>
    <property type="match status" value="1"/>
</dbReference>
<dbReference type="InterPro" id="IPR003817">
    <property type="entry name" value="PS_Dcarbxylase"/>
</dbReference>
<dbReference type="InterPro" id="IPR033175">
    <property type="entry name" value="PSD-A"/>
</dbReference>
<dbReference type="NCBIfam" id="NF003678">
    <property type="entry name" value="PRK05305.1-2"/>
    <property type="match status" value="1"/>
</dbReference>
<dbReference type="PANTHER" id="PTHR35809">
    <property type="entry name" value="ARCHAETIDYLSERINE DECARBOXYLASE PROENZYME-RELATED"/>
    <property type="match status" value="1"/>
</dbReference>
<dbReference type="PANTHER" id="PTHR35809:SF1">
    <property type="entry name" value="ARCHAETIDYLSERINE DECARBOXYLASE PROENZYME-RELATED"/>
    <property type="match status" value="1"/>
</dbReference>
<dbReference type="Pfam" id="PF02666">
    <property type="entry name" value="PS_Dcarbxylase"/>
    <property type="match status" value="1"/>
</dbReference>
<name>PSD_GEOSM</name>
<evidence type="ECO:0000255" key="1">
    <source>
        <dbReference type="HAMAP-Rule" id="MF_00664"/>
    </source>
</evidence>